<keyword id="KW-0472">Membrane</keyword>
<keyword id="KW-0812">Transmembrane</keyword>
<keyword id="KW-1133">Transmembrane helix</keyword>
<sequence>MLTGVENSESGVIDLIKPGLDDVMKNETVQVTLVNSVLGWCKAHIVDPIKTSKIVQSRAFQITMVVLGVILLIAGLALTFVLQGQLGKNAFLFLIPAVIGLVKLLTTSVFMEKPCTPEKWRLCKRLLATTEDILDDGQINQSNTIFTTESSDVTNTATQS</sequence>
<protein>
    <recommendedName>
        <fullName>Sulfur-rich protein</fullName>
    </recommendedName>
</protein>
<proteinExistence type="predicted"/>
<feature type="chain" id="PRO_0000248631" description="Sulfur-rich protein">
    <location>
        <begin position="1"/>
        <end position="160"/>
    </location>
</feature>
<feature type="transmembrane region" description="Helical" evidence="1">
    <location>
        <begin position="62"/>
        <end position="82"/>
    </location>
</feature>
<feature type="transmembrane region" description="Helical" evidence="1">
    <location>
        <begin position="91"/>
        <end position="111"/>
    </location>
</feature>
<accession>P94665</accession>
<accession>Q7BYF1</accession>
<evidence type="ECO:0000255" key="1"/>
<evidence type="ECO:0000305" key="2"/>
<dbReference type="EMBL" id="U41759">
    <property type="protein sequence ID" value="AAB41144.1"/>
    <property type="molecule type" value="Genomic_DNA"/>
</dbReference>
<dbReference type="EMBL" id="AE015925">
    <property type="protein sequence ID" value="AAP04937.1"/>
    <property type="molecule type" value="Genomic_DNA"/>
</dbReference>
<dbReference type="RefSeq" id="WP_011006158.1">
    <property type="nucleotide sequence ID" value="NC_003361.3"/>
</dbReference>
<dbReference type="SMR" id="P94665"/>
<dbReference type="STRING" id="227941.CCA_00186"/>
<dbReference type="KEGG" id="cca:CCA_00186"/>
<dbReference type="HOGENOM" id="CLU_1902939_0_0_0"/>
<dbReference type="OrthoDB" id="18131at2"/>
<dbReference type="Proteomes" id="UP000002193">
    <property type="component" value="Chromosome"/>
</dbReference>
<dbReference type="GO" id="GO:0019867">
    <property type="term" value="C:outer membrane"/>
    <property type="evidence" value="ECO:0007669"/>
    <property type="project" value="InterPro"/>
</dbReference>
<dbReference type="InterPro" id="IPR008436">
    <property type="entry name" value="CRPA"/>
</dbReference>
<dbReference type="Pfam" id="PF05745">
    <property type="entry name" value="CRPA"/>
    <property type="match status" value="1"/>
</dbReference>
<reference key="1">
    <citation type="journal article" date="1996" name="Gene">
        <title>Sequence analysis of the omp2 region of Chlamydia psittaci strain GPIC: structural and functional implications.</title>
        <authorList>
            <person name="Hsia R.-C."/>
            <person name="Bavoil P.M."/>
        </authorList>
    </citation>
    <scope>NUCLEOTIDE SEQUENCE [GENOMIC DNA]</scope>
    <source>
        <strain>ATCC VR-813 / DSM 19441 / 03DC25 / GPIC</strain>
    </source>
</reference>
<reference key="2">
    <citation type="journal article" date="2003" name="Nucleic Acids Res.">
        <title>Genome sequence of Chlamydophila caviae (Chlamydia psittaci GPIC): examining the role of niche-specific genes in the evolution of the Chlamydiaceae.</title>
        <authorList>
            <person name="Read T.D."/>
            <person name="Myers G.S.A."/>
            <person name="Brunham R.C."/>
            <person name="Nelson W.C."/>
            <person name="Paulsen I.T."/>
            <person name="Heidelberg J.F."/>
            <person name="Holtzapple E.K."/>
            <person name="Khouri H.M."/>
            <person name="Federova N.B."/>
            <person name="Carty H.A."/>
            <person name="Umayam L.A."/>
            <person name="Haft D.H."/>
            <person name="Peterson J.D."/>
            <person name="Beanan M.J."/>
            <person name="White O."/>
            <person name="Salzberg S.L."/>
            <person name="Hsia R.-C."/>
            <person name="McClarty G."/>
            <person name="Rank R.G."/>
            <person name="Bavoil P.M."/>
            <person name="Fraser C.M."/>
        </authorList>
    </citation>
    <scope>NUCLEOTIDE SEQUENCE [LARGE SCALE GENOMIC DNA]</scope>
    <source>
        <strain>ATCC VR-813 / DSM 19441 / 03DC25 / GPIC</strain>
    </source>
</reference>
<gene>
    <name type="primary">srp</name>
    <name type="ordered locus">CCA_00186</name>
</gene>
<name>SRP_CHLCV</name>
<organism>
    <name type="scientific">Chlamydia caviae (strain ATCC VR-813 / DSM 19441 / 03DC25 / GPIC)</name>
    <name type="common">Chlamydophila caviae</name>
    <dbReference type="NCBI Taxonomy" id="227941"/>
    <lineage>
        <taxon>Bacteria</taxon>
        <taxon>Pseudomonadati</taxon>
        <taxon>Chlamydiota</taxon>
        <taxon>Chlamydiia</taxon>
        <taxon>Chlamydiales</taxon>
        <taxon>Chlamydiaceae</taxon>
        <taxon>Chlamydia/Chlamydophila group</taxon>
        <taxon>Chlamydia</taxon>
    </lineage>
</organism>
<comment type="subcellular location">
    <subcellularLocation>
        <location evidence="2">Membrane</location>
        <topology evidence="2">Multi-pass membrane protein</topology>
    </subcellularLocation>
</comment>